<protein>
    <recommendedName>
        <fullName evidence="1">1,4-alpha-glucan branching enzyme GlgB</fullName>
        <ecNumber evidence="1">2.4.1.18</ecNumber>
    </recommendedName>
    <alternativeName>
        <fullName evidence="1">1,4-alpha-D-glucan:1,4-alpha-D-glucan 6-glucosyl-transferase</fullName>
    </alternativeName>
    <alternativeName>
        <fullName evidence="1">Alpha-(1-&gt;4)-glucan branching enzyme</fullName>
    </alternativeName>
    <alternativeName>
        <fullName evidence="1">Glycogen branching enzyme</fullName>
        <shortName evidence="1">BE</shortName>
    </alternativeName>
</protein>
<accession>Q8CZE8</accession>
<dbReference type="EC" id="2.4.1.18" evidence="1"/>
<dbReference type="EMBL" id="BA000028">
    <property type="protein sequence ID" value="BAC12362.1"/>
    <property type="molecule type" value="Genomic_DNA"/>
</dbReference>
<dbReference type="RefSeq" id="WP_011064812.1">
    <property type="nucleotide sequence ID" value="NC_004193.1"/>
</dbReference>
<dbReference type="SMR" id="Q8CZE8"/>
<dbReference type="STRING" id="221109.gene:10732609"/>
<dbReference type="CAZy" id="CBM48">
    <property type="family name" value="Carbohydrate-Binding Module Family 48"/>
</dbReference>
<dbReference type="CAZy" id="GH13">
    <property type="family name" value="Glycoside Hydrolase Family 13"/>
</dbReference>
<dbReference type="KEGG" id="oih:OB0406"/>
<dbReference type="eggNOG" id="COG0296">
    <property type="taxonomic scope" value="Bacteria"/>
</dbReference>
<dbReference type="HOGENOM" id="CLU_004245_3_2_9"/>
<dbReference type="OrthoDB" id="9800174at2"/>
<dbReference type="PhylomeDB" id="Q8CZE8"/>
<dbReference type="UniPathway" id="UPA00164"/>
<dbReference type="Proteomes" id="UP000000822">
    <property type="component" value="Chromosome"/>
</dbReference>
<dbReference type="GO" id="GO:0005829">
    <property type="term" value="C:cytosol"/>
    <property type="evidence" value="ECO:0007669"/>
    <property type="project" value="TreeGrafter"/>
</dbReference>
<dbReference type="GO" id="GO:0003844">
    <property type="term" value="F:1,4-alpha-glucan branching enzyme activity"/>
    <property type="evidence" value="ECO:0007669"/>
    <property type="project" value="UniProtKB-UniRule"/>
</dbReference>
<dbReference type="GO" id="GO:0043169">
    <property type="term" value="F:cation binding"/>
    <property type="evidence" value="ECO:0007669"/>
    <property type="project" value="InterPro"/>
</dbReference>
<dbReference type="GO" id="GO:0004553">
    <property type="term" value="F:hydrolase activity, hydrolyzing O-glycosyl compounds"/>
    <property type="evidence" value="ECO:0007669"/>
    <property type="project" value="InterPro"/>
</dbReference>
<dbReference type="GO" id="GO:0005978">
    <property type="term" value="P:glycogen biosynthetic process"/>
    <property type="evidence" value="ECO:0007669"/>
    <property type="project" value="UniProtKB-UniRule"/>
</dbReference>
<dbReference type="CDD" id="cd11322">
    <property type="entry name" value="AmyAc_Glg_BE"/>
    <property type="match status" value="1"/>
</dbReference>
<dbReference type="CDD" id="cd02855">
    <property type="entry name" value="E_set_GBE_prok_N"/>
    <property type="match status" value="1"/>
</dbReference>
<dbReference type="FunFam" id="2.60.40.1180:FF:000002">
    <property type="entry name" value="1,4-alpha-glucan branching enzyme GlgB"/>
    <property type="match status" value="1"/>
</dbReference>
<dbReference type="FunFam" id="3.20.20.80:FF:000003">
    <property type="entry name" value="1,4-alpha-glucan branching enzyme GlgB"/>
    <property type="match status" value="1"/>
</dbReference>
<dbReference type="Gene3D" id="3.20.20.80">
    <property type="entry name" value="Glycosidases"/>
    <property type="match status" value="1"/>
</dbReference>
<dbReference type="Gene3D" id="2.60.40.1180">
    <property type="entry name" value="Golgi alpha-mannosidase II"/>
    <property type="match status" value="1"/>
</dbReference>
<dbReference type="Gene3D" id="2.60.40.10">
    <property type="entry name" value="Immunoglobulins"/>
    <property type="match status" value="1"/>
</dbReference>
<dbReference type="HAMAP" id="MF_00685">
    <property type="entry name" value="GlgB"/>
    <property type="match status" value="1"/>
</dbReference>
<dbReference type="InterPro" id="IPR006048">
    <property type="entry name" value="A-amylase/branching_C"/>
</dbReference>
<dbReference type="InterPro" id="IPR037439">
    <property type="entry name" value="Branching_enzy"/>
</dbReference>
<dbReference type="InterPro" id="IPR006407">
    <property type="entry name" value="GlgB"/>
</dbReference>
<dbReference type="InterPro" id="IPR044143">
    <property type="entry name" value="GlgB_N_E_set_prok"/>
</dbReference>
<dbReference type="InterPro" id="IPR006047">
    <property type="entry name" value="Glyco_hydro_13_cat_dom"/>
</dbReference>
<dbReference type="InterPro" id="IPR004193">
    <property type="entry name" value="Glyco_hydro_13_N"/>
</dbReference>
<dbReference type="InterPro" id="IPR013780">
    <property type="entry name" value="Glyco_hydro_b"/>
</dbReference>
<dbReference type="InterPro" id="IPR017853">
    <property type="entry name" value="Glycoside_hydrolase_SF"/>
</dbReference>
<dbReference type="InterPro" id="IPR013783">
    <property type="entry name" value="Ig-like_fold"/>
</dbReference>
<dbReference type="InterPro" id="IPR014756">
    <property type="entry name" value="Ig_E-set"/>
</dbReference>
<dbReference type="NCBIfam" id="TIGR01515">
    <property type="entry name" value="branching_enzym"/>
    <property type="match status" value="1"/>
</dbReference>
<dbReference type="NCBIfam" id="NF003811">
    <property type="entry name" value="PRK05402.1"/>
    <property type="match status" value="1"/>
</dbReference>
<dbReference type="NCBIfam" id="NF008967">
    <property type="entry name" value="PRK12313.1"/>
    <property type="match status" value="1"/>
</dbReference>
<dbReference type="PANTHER" id="PTHR43651">
    <property type="entry name" value="1,4-ALPHA-GLUCAN-BRANCHING ENZYME"/>
    <property type="match status" value="1"/>
</dbReference>
<dbReference type="PANTHER" id="PTHR43651:SF3">
    <property type="entry name" value="1,4-ALPHA-GLUCAN-BRANCHING ENZYME"/>
    <property type="match status" value="1"/>
</dbReference>
<dbReference type="Pfam" id="PF00128">
    <property type="entry name" value="Alpha-amylase"/>
    <property type="match status" value="2"/>
</dbReference>
<dbReference type="Pfam" id="PF02806">
    <property type="entry name" value="Alpha-amylase_C"/>
    <property type="match status" value="1"/>
</dbReference>
<dbReference type="Pfam" id="PF02922">
    <property type="entry name" value="CBM_48"/>
    <property type="match status" value="1"/>
</dbReference>
<dbReference type="PIRSF" id="PIRSF000463">
    <property type="entry name" value="GlgB"/>
    <property type="match status" value="1"/>
</dbReference>
<dbReference type="SMART" id="SM00642">
    <property type="entry name" value="Aamy"/>
    <property type="match status" value="1"/>
</dbReference>
<dbReference type="SUPFAM" id="SSF51445">
    <property type="entry name" value="(Trans)glycosidases"/>
    <property type="match status" value="1"/>
</dbReference>
<dbReference type="SUPFAM" id="SSF81296">
    <property type="entry name" value="E set domains"/>
    <property type="match status" value="1"/>
</dbReference>
<dbReference type="SUPFAM" id="SSF51011">
    <property type="entry name" value="Glycosyl hydrolase domain"/>
    <property type="match status" value="1"/>
</dbReference>
<gene>
    <name evidence="1" type="primary">glgB</name>
    <name type="ordered locus">OB0406</name>
</gene>
<proteinExistence type="inferred from homology"/>
<feature type="chain" id="PRO_0000188722" description="1,4-alpha-glucan branching enzyme GlgB">
    <location>
        <begin position="1"/>
        <end position="637"/>
    </location>
</feature>
<feature type="active site" description="Nucleophile" evidence="1">
    <location>
        <position position="307"/>
    </location>
</feature>
<feature type="active site" description="Proton donor" evidence="1">
    <location>
        <position position="361"/>
    </location>
</feature>
<comment type="function">
    <text evidence="1">Catalyzes the formation of the alpha-1,6-glucosidic linkages in glycogen by scission of a 1,4-alpha-linked oligosaccharide from growing alpha-1,4-glucan chains and the subsequent attachment of the oligosaccharide to the alpha-1,6 position.</text>
</comment>
<comment type="catalytic activity">
    <reaction evidence="1">
        <text>Transfers a segment of a (1-&gt;4)-alpha-D-glucan chain to a primary hydroxy group in a similar glucan chain.</text>
        <dbReference type="EC" id="2.4.1.18"/>
    </reaction>
</comment>
<comment type="pathway">
    <text evidence="1">Glycan biosynthesis; glycogen biosynthesis.</text>
</comment>
<comment type="subunit">
    <text evidence="1">Monomer.</text>
</comment>
<comment type="similarity">
    <text evidence="1">Belongs to the glycosyl hydrolase 13 family. GlgB subfamily.</text>
</comment>
<sequence>MYHISAEDIYLFHQGTNFESHQFLGCHEINWKGKRGYRFAVWAPNALKVCVVGDFNNWEENSHPLEKFTDEGLWGGFIADIPPATSYKYHICSSEDTSILKADPFATQAERRPKTASVIPAANGYQWSDDQWIEQRNTYDPYSSPISIYEVHLGTWKKTLKKQFLSYRELATQLIPYVKSLGYTHIELLPINEHPFDRSWGYQITGYFAVTSRYGNPSDFKYFIDQCHQHQIGVILDWVPGHFCKDDFGLRQFDGAPLYEYRDPKKSEKKSWGTLAFDYGRPEVQSFLISNAIYWLKEFHIDGLRVDAVASMLYLNFDRYDEEEKIYNTYGGEENLEAFAFLRKLNKVVFSYIPGALMMAEDSSDLPLVTAPVNKGGLGFNYKWNMGWMNDLLSFMEKESIHRKWHHNRLTFSFMYTYSENYLLPLSHDEVVHGKKSLLDKMPGDQWQQFANLRLLYGYMYTHPGKKLVFMGGELAQYAEWKDTEELDWHLLEYPLHKGIYHYIKNLNELYQQHPELYELDHLSEGFEWIDPHNIDQSVIAFRRKANKPNQELIIICNFTPQVHFDYKIGVPESGRYKEIFNSDSVRFGGSGQINEGEHFSFPEKWHGLSQHIKIKVPPLAISVFQIEVERERLPRE</sequence>
<keyword id="KW-0119">Carbohydrate metabolism</keyword>
<keyword id="KW-0320">Glycogen biosynthesis</keyword>
<keyword id="KW-0321">Glycogen metabolism</keyword>
<keyword id="KW-0328">Glycosyltransferase</keyword>
<keyword id="KW-1185">Reference proteome</keyword>
<keyword id="KW-0808">Transferase</keyword>
<name>GLGB_OCEIH</name>
<reference key="1">
    <citation type="journal article" date="2002" name="Nucleic Acids Res.">
        <title>Genome sequence of Oceanobacillus iheyensis isolated from the Iheya Ridge and its unexpected adaptive capabilities to extreme environments.</title>
        <authorList>
            <person name="Takami H."/>
            <person name="Takaki Y."/>
            <person name="Uchiyama I."/>
        </authorList>
    </citation>
    <scope>NUCLEOTIDE SEQUENCE [LARGE SCALE GENOMIC DNA]</scope>
    <source>
        <strain>DSM 14371 / CIP 107618 / JCM 11309 / KCTC 3954 / HTE831</strain>
    </source>
</reference>
<evidence type="ECO:0000255" key="1">
    <source>
        <dbReference type="HAMAP-Rule" id="MF_00685"/>
    </source>
</evidence>
<organism>
    <name type="scientific">Oceanobacillus iheyensis (strain DSM 14371 / CIP 107618 / JCM 11309 / KCTC 3954 / HTE831)</name>
    <dbReference type="NCBI Taxonomy" id="221109"/>
    <lineage>
        <taxon>Bacteria</taxon>
        <taxon>Bacillati</taxon>
        <taxon>Bacillota</taxon>
        <taxon>Bacilli</taxon>
        <taxon>Bacillales</taxon>
        <taxon>Bacillaceae</taxon>
        <taxon>Oceanobacillus</taxon>
    </lineage>
</organism>